<gene>
    <name evidence="1" type="primary">rlmH</name>
    <name type="ordered locus">GTNG_3408</name>
</gene>
<reference key="1">
    <citation type="journal article" date="2007" name="Proc. Natl. Acad. Sci. U.S.A.">
        <title>Genome and proteome of long-chain alkane degrading Geobacillus thermodenitrificans NG80-2 isolated from a deep-subsurface oil reservoir.</title>
        <authorList>
            <person name="Feng L."/>
            <person name="Wang W."/>
            <person name="Cheng J."/>
            <person name="Ren Y."/>
            <person name="Zhao G."/>
            <person name="Gao C."/>
            <person name="Tang Y."/>
            <person name="Liu X."/>
            <person name="Han W."/>
            <person name="Peng X."/>
            <person name="Liu R."/>
            <person name="Wang L."/>
        </authorList>
    </citation>
    <scope>NUCLEOTIDE SEQUENCE [LARGE SCALE GENOMIC DNA]</scope>
    <source>
        <strain>NG80-2</strain>
    </source>
</reference>
<protein>
    <recommendedName>
        <fullName evidence="1">Ribosomal RNA large subunit methyltransferase H</fullName>
        <ecNumber evidence="1">2.1.1.177</ecNumber>
    </recommendedName>
    <alternativeName>
        <fullName evidence="1">23S rRNA (pseudouridine1915-N3)-methyltransferase</fullName>
    </alternativeName>
    <alternativeName>
        <fullName evidence="1">23S rRNA m3Psi1915 methyltransferase</fullName>
    </alternativeName>
    <alternativeName>
        <fullName evidence="1">rRNA (pseudouridine-N3-)-methyltransferase RlmH</fullName>
    </alternativeName>
</protein>
<accession>A4ITU1</accession>
<dbReference type="EC" id="2.1.1.177" evidence="1"/>
<dbReference type="EMBL" id="CP000557">
    <property type="protein sequence ID" value="ABO68745.1"/>
    <property type="status" value="ALT_INIT"/>
    <property type="molecule type" value="Genomic_DNA"/>
</dbReference>
<dbReference type="RefSeq" id="WP_041264774.1">
    <property type="nucleotide sequence ID" value="NC_009328.1"/>
</dbReference>
<dbReference type="SMR" id="A4ITU1"/>
<dbReference type="KEGG" id="gtn:GTNG_3408"/>
<dbReference type="eggNOG" id="COG1576">
    <property type="taxonomic scope" value="Bacteria"/>
</dbReference>
<dbReference type="HOGENOM" id="CLU_100552_1_2_9"/>
<dbReference type="Proteomes" id="UP000001578">
    <property type="component" value="Chromosome"/>
</dbReference>
<dbReference type="GO" id="GO:0005737">
    <property type="term" value="C:cytoplasm"/>
    <property type="evidence" value="ECO:0007669"/>
    <property type="project" value="UniProtKB-SubCell"/>
</dbReference>
<dbReference type="GO" id="GO:0070038">
    <property type="term" value="F:rRNA (pseudouridine-N3-)-methyltransferase activity"/>
    <property type="evidence" value="ECO:0007669"/>
    <property type="project" value="UniProtKB-UniRule"/>
</dbReference>
<dbReference type="CDD" id="cd18081">
    <property type="entry name" value="RlmH-like"/>
    <property type="match status" value="1"/>
</dbReference>
<dbReference type="Gene3D" id="3.40.1280.10">
    <property type="match status" value="1"/>
</dbReference>
<dbReference type="HAMAP" id="MF_00658">
    <property type="entry name" value="23SrRNA_methyltr_H"/>
    <property type="match status" value="1"/>
</dbReference>
<dbReference type="InterPro" id="IPR029028">
    <property type="entry name" value="Alpha/beta_knot_MTases"/>
</dbReference>
<dbReference type="InterPro" id="IPR003742">
    <property type="entry name" value="RlmH-like"/>
</dbReference>
<dbReference type="InterPro" id="IPR029026">
    <property type="entry name" value="tRNA_m1G_MTases_N"/>
</dbReference>
<dbReference type="NCBIfam" id="NF000985">
    <property type="entry name" value="PRK00103.1-3"/>
    <property type="match status" value="1"/>
</dbReference>
<dbReference type="NCBIfam" id="TIGR00246">
    <property type="entry name" value="tRNA_RlmH_YbeA"/>
    <property type="match status" value="1"/>
</dbReference>
<dbReference type="PANTHER" id="PTHR33603">
    <property type="entry name" value="METHYLTRANSFERASE"/>
    <property type="match status" value="1"/>
</dbReference>
<dbReference type="PANTHER" id="PTHR33603:SF1">
    <property type="entry name" value="RIBOSOMAL RNA LARGE SUBUNIT METHYLTRANSFERASE H"/>
    <property type="match status" value="1"/>
</dbReference>
<dbReference type="Pfam" id="PF02590">
    <property type="entry name" value="SPOUT_MTase"/>
    <property type="match status" value="1"/>
</dbReference>
<dbReference type="PIRSF" id="PIRSF004505">
    <property type="entry name" value="MT_bac"/>
    <property type="match status" value="1"/>
</dbReference>
<dbReference type="SUPFAM" id="SSF75217">
    <property type="entry name" value="alpha/beta knot"/>
    <property type="match status" value="1"/>
</dbReference>
<sequence length="159" mass="17999">MHISIAAVGKLKEKYLIAGVQEYTKRLSAYAKIEIIEVADEKTPERASELEEEQIKQREGERLLAKIPHDAHVIALAIEGKMKSSEQFAARLDELATYGKSKVVFVIGGSLGLSKQVMARADEALSFSKMTFPHQLMRLILLEQIYRAFRINRGEPYHK</sequence>
<evidence type="ECO:0000255" key="1">
    <source>
        <dbReference type="HAMAP-Rule" id="MF_00658"/>
    </source>
</evidence>
<evidence type="ECO:0000305" key="2"/>
<name>RLMH_GEOTN</name>
<comment type="function">
    <text evidence="1">Specifically methylates the pseudouridine at position 1915 (m3Psi1915) in 23S rRNA.</text>
</comment>
<comment type="catalytic activity">
    <reaction evidence="1">
        <text>pseudouridine(1915) in 23S rRNA + S-adenosyl-L-methionine = N(3)-methylpseudouridine(1915) in 23S rRNA + S-adenosyl-L-homocysteine + H(+)</text>
        <dbReference type="Rhea" id="RHEA:42752"/>
        <dbReference type="Rhea" id="RHEA-COMP:10221"/>
        <dbReference type="Rhea" id="RHEA-COMP:10222"/>
        <dbReference type="ChEBI" id="CHEBI:15378"/>
        <dbReference type="ChEBI" id="CHEBI:57856"/>
        <dbReference type="ChEBI" id="CHEBI:59789"/>
        <dbReference type="ChEBI" id="CHEBI:65314"/>
        <dbReference type="ChEBI" id="CHEBI:74486"/>
        <dbReference type="EC" id="2.1.1.177"/>
    </reaction>
</comment>
<comment type="subunit">
    <text evidence="1">Homodimer.</text>
</comment>
<comment type="subcellular location">
    <subcellularLocation>
        <location evidence="1">Cytoplasm</location>
    </subcellularLocation>
</comment>
<comment type="similarity">
    <text evidence="1">Belongs to the RNA methyltransferase RlmH family.</text>
</comment>
<comment type="sequence caution" evidence="2">
    <conflict type="erroneous initiation">
        <sequence resource="EMBL-CDS" id="ABO68745"/>
    </conflict>
</comment>
<organism>
    <name type="scientific">Geobacillus thermodenitrificans (strain NG80-2)</name>
    <dbReference type="NCBI Taxonomy" id="420246"/>
    <lineage>
        <taxon>Bacteria</taxon>
        <taxon>Bacillati</taxon>
        <taxon>Bacillota</taxon>
        <taxon>Bacilli</taxon>
        <taxon>Bacillales</taxon>
        <taxon>Anoxybacillaceae</taxon>
        <taxon>Geobacillus</taxon>
    </lineage>
</organism>
<keyword id="KW-0963">Cytoplasm</keyword>
<keyword id="KW-0489">Methyltransferase</keyword>
<keyword id="KW-0698">rRNA processing</keyword>
<keyword id="KW-0949">S-adenosyl-L-methionine</keyword>
<keyword id="KW-0808">Transferase</keyword>
<feature type="chain" id="PRO_0000366599" description="Ribosomal RNA large subunit methyltransferase H">
    <location>
        <begin position="1"/>
        <end position="159"/>
    </location>
</feature>
<feature type="binding site" evidence="1">
    <location>
        <position position="76"/>
    </location>
    <ligand>
        <name>S-adenosyl-L-methionine</name>
        <dbReference type="ChEBI" id="CHEBI:59789"/>
    </ligand>
</feature>
<feature type="binding site" evidence="1">
    <location>
        <position position="108"/>
    </location>
    <ligand>
        <name>S-adenosyl-L-methionine</name>
        <dbReference type="ChEBI" id="CHEBI:59789"/>
    </ligand>
</feature>
<feature type="binding site" evidence="1">
    <location>
        <begin position="127"/>
        <end position="132"/>
    </location>
    <ligand>
        <name>S-adenosyl-L-methionine</name>
        <dbReference type="ChEBI" id="CHEBI:59789"/>
    </ligand>
</feature>
<proteinExistence type="inferred from homology"/>